<sequence length="89" mass="10560">MALTQERKNEIIAQFRTHETDTGSPEVQIAVLTEQINTLNEHLRTHKKDHHSRRGLLKMVGKRRNLLTYLRNSDITRYRELITKLGLRR</sequence>
<dbReference type="EMBL" id="AE017194">
    <property type="protein sequence ID" value="AAS42751.1"/>
    <property type="molecule type" value="Genomic_DNA"/>
</dbReference>
<dbReference type="SMR" id="Q732R4"/>
<dbReference type="KEGG" id="bca:BCE_3846"/>
<dbReference type="HOGENOM" id="CLU_148518_0_0_9"/>
<dbReference type="Proteomes" id="UP000002527">
    <property type="component" value="Chromosome"/>
</dbReference>
<dbReference type="GO" id="GO:0022627">
    <property type="term" value="C:cytosolic small ribosomal subunit"/>
    <property type="evidence" value="ECO:0007669"/>
    <property type="project" value="TreeGrafter"/>
</dbReference>
<dbReference type="GO" id="GO:0019843">
    <property type="term" value="F:rRNA binding"/>
    <property type="evidence" value="ECO:0007669"/>
    <property type="project" value="UniProtKB-UniRule"/>
</dbReference>
<dbReference type="GO" id="GO:0003735">
    <property type="term" value="F:structural constituent of ribosome"/>
    <property type="evidence" value="ECO:0007669"/>
    <property type="project" value="InterPro"/>
</dbReference>
<dbReference type="GO" id="GO:0006412">
    <property type="term" value="P:translation"/>
    <property type="evidence" value="ECO:0007669"/>
    <property type="project" value="UniProtKB-UniRule"/>
</dbReference>
<dbReference type="CDD" id="cd00353">
    <property type="entry name" value="Ribosomal_S15p_S13e"/>
    <property type="match status" value="1"/>
</dbReference>
<dbReference type="FunFam" id="1.10.287.10:FF:000002">
    <property type="entry name" value="30S ribosomal protein S15"/>
    <property type="match status" value="1"/>
</dbReference>
<dbReference type="Gene3D" id="6.10.250.3130">
    <property type="match status" value="1"/>
</dbReference>
<dbReference type="Gene3D" id="1.10.287.10">
    <property type="entry name" value="S15/NS1, RNA-binding"/>
    <property type="match status" value="1"/>
</dbReference>
<dbReference type="HAMAP" id="MF_01343_B">
    <property type="entry name" value="Ribosomal_uS15_B"/>
    <property type="match status" value="1"/>
</dbReference>
<dbReference type="InterPro" id="IPR000589">
    <property type="entry name" value="Ribosomal_uS15"/>
</dbReference>
<dbReference type="InterPro" id="IPR005290">
    <property type="entry name" value="Ribosomal_uS15_bac-type"/>
</dbReference>
<dbReference type="InterPro" id="IPR009068">
    <property type="entry name" value="uS15_NS1_RNA-bd_sf"/>
</dbReference>
<dbReference type="NCBIfam" id="TIGR00952">
    <property type="entry name" value="S15_bact"/>
    <property type="match status" value="1"/>
</dbReference>
<dbReference type="PANTHER" id="PTHR23321">
    <property type="entry name" value="RIBOSOMAL PROTEIN S15, BACTERIAL AND ORGANELLAR"/>
    <property type="match status" value="1"/>
</dbReference>
<dbReference type="PANTHER" id="PTHR23321:SF26">
    <property type="entry name" value="SMALL RIBOSOMAL SUBUNIT PROTEIN US15M"/>
    <property type="match status" value="1"/>
</dbReference>
<dbReference type="Pfam" id="PF00312">
    <property type="entry name" value="Ribosomal_S15"/>
    <property type="match status" value="1"/>
</dbReference>
<dbReference type="SMART" id="SM01387">
    <property type="entry name" value="Ribosomal_S15"/>
    <property type="match status" value="1"/>
</dbReference>
<dbReference type="SUPFAM" id="SSF47060">
    <property type="entry name" value="S15/NS1 RNA-binding domain"/>
    <property type="match status" value="1"/>
</dbReference>
<dbReference type="PROSITE" id="PS00362">
    <property type="entry name" value="RIBOSOMAL_S15"/>
    <property type="match status" value="1"/>
</dbReference>
<accession>Q732R4</accession>
<reference key="1">
    <citation type="journal article" date="2004" name="Nucleic Acids Res.">
        <title>The genome sequence of Bacillus cereus ATCC 10987 reveals metabolic adaptations and a large plasmid related to Bacillus anthracis pXO1.</title>
        <authorList>
            <person name="Rasko D.A."/>
            <person name="Ravel J."/>
            <person name="Oekstad O.A."/>
            <person name="Helgason E."/>
            <person name="Cer R.Z."/>
            <person name="Jiang L."/>
            <person name="Shores K.A."/>
            <person name="Fouts D.E."/>
            <person name="Tourasse N.J."/>
            <person name="Angiuoli S.V."/>
            <person name="Kolonay J.F."/>
            <person name="Nelson W.C."/>
            <person name="Kolstoe A.-B."/>
            <person name="Fraser C.M."/>
            <person name="Read T.D."/>
        </authorList>
    </citation>
    <scope>NUCLEOTIDE SEQUENCE [LARGE SCALE GENOMIC DNA]</scope>
    <source>
        <strain>ATCC 10987 / NRS 248</strain>
    </source>
</reference>
<feature type="chain" id="PRO_0000115374" description="Small ribosomal subunit protein uS15">
    <location>
        <begin position="1"/>
        <end position="89"/>
    </location>
</feature>
<comment type="function">
    <text evidence="1">One of the primary rRNA binding proteins, it binds directly to 16S rRNA where it helps nucleate assembly of the platform of the 30S subunit by binding and bridging several RNA helices of the 16S rRNA.</text>
</comment>
<comment type="function">
    <text evidence="1">Forms an intersubunit bridge (bridge B4) with the 23S rRNA of the 50S subunit in the ribosome.</text>
</comment>
<comment type="subunit">
    <text evidence="1">Part of the 30S ribosomal subunit. Forms a bridge to the 50S subunit in the 70S ribosome, contacting the 23S rRNA.</text>
</comment>
<comment type="similarity">
    <text evidence="1">Belongs to the universal ribosomal protein uS15 family.</text>
</comment>
<name>RS15_BACC1</name>
<evidence type="ECO:0000255" key="1">
    <source>
        <dbReference type="HAMAP-Rule" id="MF_01343"/>
    </source>
</evidence>
<evidence type="ECO:0000305" key="2"/>
<organism>
    <name type="scientific">Bacillus cereus (strain ATCC 10987 / NRS 248)</name>
    <dbReference type="NCBI Taxonomy" id="222523"/>
    <lineage>
        <taxon>Bacteria</taxon>
        <taxon>Bacillati</taxon>
        <taxon>Bacillota</taxon>
        <taxon>Bacilli</taxon>
        <taxon>Bacillales</taxon>
        <taxon>Bacillaceae</taxon>
        <taxon>Bacillus</taxon>
        <taxon>Bacillus cereus group</taxon>
    </lineage>
</organism>
<proteinExistence type="inferred from homology"/>
<keyword id="KW-0687">Ribonucleoprotein</keyword>
<keyword id="KW-0689">Ribosomal protein</keyword>
<keyword id="KW-0694">RNA-binding</keyword>
<keyword id="KW-0699">rRNA-binding</keyword>
<protein>
    <recommendedName>
        <fullName evidence="1">Small ribosomal subunit protein uS15</fullName>
    </recommendedName>
    <alternativeName>
        <fullName evidence="2">30S ribosomal protein S15</fullName>
    </alternativeName>
</protein>
<gene>
    <name evidence="1" type="primary">rpsO</name>
    <name type="ordered locus">BCE_3846</name>
</gene>